<organism>
    <name type="scientific">Streptococcus pneumoniae (strain ATCC BAA-255 / R6)</name>
    <dbReference type="NCBI Taxonomy" id="171101"/>
    <lineage>
        <taxon>Bacteria</taxon>
        <taxon>Bacillati</taxon>
        <taxon>Bacillota</taxon>
        <taxon>Bacilli</taxon>
        <taxon>Lactobacillales</taxon>
        <taxon>Streptococcaceae</taxon>
        <taxon>Streptococcus</taxon>
    </lineage>
</organism>
<accession>Q8DNE1</accession>
<name>YIDC1_STRR6</name>
<reference key="1">
    <citation type="journal article" date="2001" name="J. Bacteriol.">
        <title>Genome of the bacterium Streptococcus pneumoniae strain R6.</title>
        <authorList>
            <person name="Hoskins J."/>
            <person name="Alborn W.E. Jr."/>
            <person name="Arnold J."/>
            <person name="Blaszczak L.C."/>
            <person name="Burgett S."/>
            <person name="DeHoff B.S."/>
            <person name="Estrem S.T."/>
            <person name="Fritz L."/>
            <person name="Fu D.-J."/>
            <person name="Fuller W."/>
            <person name="Geringer C."/>
            <person name="Gilmour R."/>
            <person name="Glass J.S."/>
            <person name="Khoja H."/>
            <person name="Kraft A.R."/>
            <person name="Lagace R.E."/>
            <person name="LeBlanc D.J."/>
            <person name="Lee L.N."/>
            <person name="Lefkowitz E.J."/>
            <person name="Lu J."/>
            <person name="Matsushima P."/>
            <person name="McAhren S.M."/>
            <person name="McHenney M."/>
            <person name="McLeaster K."/>
            <person name="Mundy C.W."/>
            <person name="Nicas T.I."/>
            <person name="Norris F.H."/>
            <person name="O'Gara M."/>
            <person name="Peery R.B."/>
            <person name="Robertson G.T."/>
            <person name="Rockey P."/>
            <person name="Sun P.-M."/>
            <person name="Winkler M.E."/>
            <person name="Yang Y."/>
            <person name="Young-Bellido M."/>
            <person name="Zhao G."/>
            <person name="Zook C.A."/>
            <person name="Baltz R.H."/>
            <person name="Jaskunas S.R."/>
            <person name="Rosteck P.R. Jr."/>
            <person name="Skatrud P.L."/>
            <person name="Glass J.I."/>
        </authorList>
    </citation>
    <scope>NUCLEOTIDE SEQUENCE [LARGE SCALE GENOMIC DNA]</scope>
    <source>
        <strain>ATCC BAA-255 / R6</strain>
    </source>
</reference>
<keyword id="KW-1003">Cell membrane</keyword>
<keyword id="KW-0143">Chaperone</keyword>
<keyword id="KW-0449">Lipoprotein</keyword>
<keyword id="KW-0472">Membrane</keyword>
<keyword id="KW-0564">Palmitate</keyword>
<keyword id="KW-0653">Protein transport</keyword>
<keyword id="KW-1185">Reference proteome</keyword>
<keyword id="KW-0732">Signal</keyword>
<keyword id="KW-0812">Transmembrane</keyword>
<keyword id="KW-1133">Transmembrane helix</keyword>
<keyword id="KW-0813">Transport</keyword>
<protein>
    <recommendedName>
        <fullName evidence="1">Membrane protein insertase YidC 1</fullName>
    </recommendedName>
    <alternativeName>
        <fullName evidence="1">Foldase YidC 1</fullName>
    </alternativeName>
    <alternativeName>
        <fullName evidence="1">Membrane integrase YidC 1</fullName>
    </alternativeName>
    <alternativeName>
        <fullName evidence="1">Membrane protein YidC 1</fullName>
    </alternativeName>
</protein>
<evidence type="ECO:0000255" key="1">
    <source>
        <dbReference type="HAMAP-Rule" id="MF_01811"/>
    </source>
</evidence>
<evidence type="ECO:0000256" key="2">
    <source>
        <dbReference type="SAM" id="MobiDB-lite"/>
    </source>
</evidence>
<feature type="signal peptide" evidence="1">
    <location>
        <begin position="1"/>
        <end position="22"/>
    </location>
</feature>
<feature type="chain" id="PRO_0000020409" description="Membrane protein insertase YidC 1">
    <location>
        <begin position="23"/>
        <end position="308"/>
    </location>
</feature>
<feature type="transmembrane region" description="Helical" evidence="1">
    <location>
        <begin position="60"/>
        <end position="80"/>
    </location>
</feature>
<feature type="transmembrane region" description="Helical" evidence="1">
    <location>
        <begin position="135"/>
        <end position="155"/>
    </location>
</feature>
<feature type="transmembrane region" description="Helical" evidence="1">
    <location>
        <begin position="168"/>
        <end position="188"/>
    </location>
</feature>
<feature type="transmembrane region" description="Helical" evidence="1">
    <location>
        <begin position="211"/>
        <end position="225"/>
    </location>
</feature>
<feature type="transmembrane region" description="Helical" evidence="1">
    <location>
        <begin position="230"/>
        <end position="252"/>
    </location>
</feature>
<feature type="region of interest" description="Disordered" evidence="2">
    <location>
        <begin position="263"/>
        <end position="308"/>
    </location>
</feature>
<feature type="compositionally biased region" description="Polar residues" evidence="2">
    <location>
        <begin position="269"/>
        <end position="278"/>
    </location>
</feature>
<feature type="compositionally biased region" description="Basic residues" evidence="2">
    <location>
        <begin position="293"/>
        <end position="308"/>
    </location>
</feature>
<feature type="lipid moiety-binding region" description="N-palmitoyl cysteine" evidence="1">
    <location>
        <position position="23"/>
    </location>
</feature>
<feature type="lipid moiety-binding region" description="S-diacylglycerol cysteine" evidence="1">
    <location>
        <position position="23"/>
    </location>
</feature>
<sequence>MKSIKRFALSAMGAAMLLVLTGCVNVDKTTGQPTGFIWNTIGAPMAEAIKYFATDKGLGFGVAIIIVTIIVRLIILPLGIYQSWKATLHSEKMNALKHVLEPHQTRLKEATTQEEKLEAQQALFAAQKEHGISMFGGVGCFPILLQMPFFSAIYFAAQHTEGVAQASYLGIPLGSPSMILVACAGVLYYLQSLLSLHGVEDEMQREQIKKMIYMSPLMIVVFSLFSPASVTLYWVVGGFMMILQQFIVNYIVRPKLRKKVHEELAKNPSKASAFSTPSGRKDVTPEQPTAITSKKKHKNRNAGKQRSR</sequence>
<proteinExistence type="inferred from homology"/>
<comment type="function">
    <text evidence="1">Required for the insertion and/or proper folding and/or complex formation of integral membrane proteins into the membrane. Involved in integration of membrane proteins that insert both dependently and independently of the Sec translocase complex, as well as at least some lipoproteins.</text>
</comment>
<comment type="subcellular location">
    <subcellularLocation>
        <location evidence="1">Cell membrane</location>
        <topology evidence="1">Multi-pass membrane protein</topology>
    </subcellularLocation>
</comment>
<comment type="similarity">
    <text evidence="1">Belongs to the OXA1/ALB3/YidC family. Type 2 subfamily.</text>
</comment>
<dbReference type="EMBL" id="AE007317">
    <property type="protein sequence ID" value="AAL00593.1"/>
    <property type="molecule type" value="Genomic_DNA"/>
</dbReference>
<dbReference type="PIR" id="D98095">
    <property type="entry name" value="D98095"/>
</dbReference>
<dbReference type="RefSeq" id="NP_359382.1">
    <property type="nucleotide sequence ID" value="NC_003098.1"/>
</dbReference>
<dbReference type="RefSeq" id="WP_000835947.1">
    <property type="nucleotide sequence ID" value="NC_003098.1"/>
</dbReference>
<dbReference type="SMR" id="Q8DNE1"/>
<dbReference type="STRING" id="171101.spr1790"/>
<dbReference type="KEGG" id="spr:spr1790"/>
<dbReference type="PATRIC" id="fig|171101.6.peg.1932"/>
<dbReference type="eggNOG" id="COG0706">
    <property type="taxonomic scope" value="Bacteria"/>
</dbReference>
<dbReference type="HOGENOM" id="CLU_036138_5_1_9"/>
<dbReference type="Proteomes" id="UP000000586">
    <property type="component" value="Chromosome"/>
</dbReference>
<dbReference type="GO" id="GO:0005886">
    <property type="term" value="C:plasma membrane"/>
    <property type="evidence" value="ECO:0000318"/>
    <property type="project" value="GO_Central"/>
</dbReference>
<dbReference type="GO" id="GO:0032977">
    <property type="term" value="F:membrane insertase activity"/>
    <property type="evidence" value="ECO:0000318"/>
    <property type="project" value="GO_Central"/>
</dbReference>
<dbReference type="GO" id="GO:0051205">
    <property type="term" value="P:protein insertion into membrane"/>
    <property type="evidence" value="ECO:0000318"/>
    <property type="project" value="GO_Central"/>
</dbReference>
<dbReference type="GO" id="GO:0015031">
    <property type="term" value="P:protein transport"/>
    <property type="evidence" value="ECO:0007669"/>
    <property type="project" value="UniProtKB-KW"/>
</dbReference>
<dbReference type="CDD" id="cd20070">
    <property type="entry name" value="5TM_YidC_Alb3"/>
    <property type="match status" value="1"/>
</dbReference>
<dbReference type="HAMAP" id="MF_01811">
    <property type="entry name" value="YidC_type2"/>
    <property type="match status" value="1"/>
</dbReference>
<dbReference type="InterPro" id="IPR001708">
    <property type="entry name" value="YidC/ALB3/OXA1/COX18"/>
</dbReference>
<dbReference type="InterPro" id="IPR028055">
    <property type="entry name" value="YidC/Oxa/ALB_C"/>
</dbReference>
<dbReference type="InterPro" id="IPR023060">
    <property type="entry name" value="YidC/YidC1/YidC2_Firmicutes"/>
</dbReference>
<dbReference type="InterPro" id="IPR047196">
    <property type="entry name" value="YidC_ALB_C"/>
</dbReference>
<dbReference type="NCBIfam" id="NF002687">
    <property type="entry name" value="PRK02463.1"/>
    <property type="match status" value="1"/>
</dbReference>
<dbReference type="NCBIfam" id="TIGR03592">
    <property type="entry name" value="yidC_oxa1_cterm"/>
    <property type="match status" value="1"/>
</dbReference>
<dbReference type="PANTHER" id="PTHR12428:SF65">
    <property type="entry name" value="CYTOCHROME C OXIDASE ASSEMBLY PROTEIN COX18, MITOCHONDRIAL"/>
    <property type="match status" value="1"/>
</dbReference>
<dbReference type="PANTHER" id="PTHR12428">
    <property type="entry name" value="OXA1"/>
    <property type="match status" value="1"/>
</dbReference>
<dbReference type="Pfam" id="PF02096">
    <property type="entry name" value="60KD_IMP"/>
    <property type="match status" value="1"/>
</dbReference>
<dbReference type="PROSITE" id="PS51257">
    <property type="entry name" value="PROKAR_LIPOPROTEIN"/>
    <property type="match status" value="1"/>
</dbReference>
<gene>
    <name evidence="1" type="primary">yidC1</name>
    <name type="ordered locus">spr1790</name>
</gene>